<gene>
    <name type="primary">Ubiad1</name>
</gene>
<protein>
    <recommendedName>
        <fullName>UbiA prenyltransferase domain-containing protein 1</fullName>
        <ecNumber evidence="1">2.5.1.-</ecNumber>
        <ecNumber evidence="1">2.5.1.39</ecNumber>
    </recommendedName>
</protein>
<feature type="initiator methionine" description="Removed" evidence="1">
    <location>
        <position position="1"/>
    </location>
</feature>
<feature type="chain" id="PRO_0000403783" description="UbiA prenyltransferase domain-containing protein 1">
    <location>
        <begin position="2"/>
        <end position="338"/>
    </location>
</feature>
<feature type="transmembrane region" description="Helical" evidence="2">
    <location>
        <begin position="83"/>
        <end position="103"/>
    </location>
</feature>
<feature type="transmembrane region" description="Helical" evidence="2">
    <location>
        <begin position="134"/>
        <end position="154"/>
    </location>
</feature>
<feature type="transmembrane region" description="Helical" evidence="2">
    <location>
        <begin position="160"/>
        <end position="180"/>
    </location>
</feature>
<feature type="transmembrane region" description="Helical" evidence="2">
    <location>
        <begin position="188"/>
        <end position="208"/>
    </location>
</feature>
<feature type="transmembrane region" description="Helical" evidence="2">
    <location>
        <begin position="209"/>
        <end position="229"/>
    </location>
</feature>
<feature type="transmembrane region" description="Helical" evidence="2">
    <location>
        <begin position="245"/>
        <end position="267"/>
    </location>
</feature>
<feature type="transmembrane region" description="Helical" evidence="2">
    <location>
        <begin position="277"/>
        <end position="297"/>
    </location>
</feature>
<feature type="transmembrane region" description="Helical" evidence="2">
    <location>
        <begin position="315"/>
        <end position="335"/>
    </location>
</feature>
<feature type="region of interest" description="Disordered" evidence="3">
    <location>
        <begin position="1"/>
        <end position="39"/>
    </location>
</feature>
<feature type="compositionally biased region" description="Polar residues" evidence="3">
    <location>
        <begin position="15"/>
        <end position="24"/>
    </location>
</feature>
<feature type="compositionally biased region" description="Basic and acidic residues" evidence="3">
    <location>
        <begin position="25"/>
        <end position="39"/>
    </location>
</feature>
<feature type="modified residue" description="N-acetylalanine" evidence="1">
    <location>
        <position position="2"/>
    </location>
</feature>
<sequence length="338" mass="37026">MAAVQAPGEKINIQAGETTQVGDTDQQRNDWPEEDRLPERSWRQKCASYVLALRPWSFSASLTPVALGSALAYRSQGVLDPRLLLGCAVAVLAVHGAGNLVNTYYDFSKGIDHKKSDDRTLVDRILEPQDVVRFGVFLYTLGCVCAAYLYYLSTLKLEHLALIYFGGLSGSFLYTGGIGFKYVALGDLVILITFGPLAVMFAYAVQVGSLAIFPLVYAIPLALSTEAILHSNNTRDMESDREAGIVTLAILIGPTLSYILYNTLLFLPYLIFTILATHCSISLALPLLTSPMAFSLERQFRSQAFNKLPQRTAKLNLLLGLFYVFGIILAPAGSLPRL</sequence>
<reference key="1">
    <citation type="submission" date="2005-07" db="EMBL/GenBank/DDBJ databases">
        <authorList>
            <person name="Mural R.J."/>
            <person name="Adams M.D."/>
            <person name="Myers E.W."/>
            <person name="Smith H.O."/>
            <person name="Venter J.C."/>
        </authorList>
    </citation>
    <scope>NUCLEOTIDE SEQUENCE [LARGE SCALE GENOMIC DNA]</scope>
    <source>
        <strain>Brown Norway</strain>
    </source>
</reference>
<accession>D3ZG27</accession>
<evidence type="ECO:0000250" key="1">
    <source>
        <dbReference type="UniProtKB" id="Q9Y5Z9"/>
    </source>
</evidence>
<evidence type="ECO:0000255" key="2"/>
<evidence type="ECO:0000256" key="3">
    <source>
        <dbReference type="SAM" id="MobiDB-lite"/>
    </source>
</evidence>
<evidence type="ECO:0000305" key="4"/>
<comment type="function">
    <text evidence="1">Prenyltransferase that mediates the formation of menaquinone-4 (MK-4) and coenzyme Q10. MK-4 is a vitamin K2 isoform required for endothelial cell development. Mediates the conversion of phylloquinone (PK) into MK-4, probably by cleaving the side chain of phylloquinone (PK) to release 2-methyl-1,4-naphthoquinone (menadione; K3) and then prenylating it with geranylgeranyl pyrophosphate (GGPP) to form MK-4. Also plays a role in cardiovascular development independently of MK-4 biosynthesis, by acting as a coenzyme Q10 biosynthetic enzyme: coenzyme Q10, also named ubiquinone, plays an important antioxidant role in the cardiovascular system. Mediates biosynthesis of coenzyme Q10 in the Golgi membrane, leading to protect cardiovascular tissues from NOS3/eNOS-dependent oxidative stress.</text>
</comment>
<comment type="catalytic activity">
    <reaction evidence="1">
        <text>menadiol + (2E,6E,10E)-geranylgeranyl diphosphate = menaquinol-4 + diphosphate</text>
        <dbReference type="Rhea" id="RHEA:74083"/>
        <dbReference type="ChEBI" id="CHEBI:6746"/>
        <dbReference type="ChEBI" id="CHEBI:33019"/>
        <dbReference type="ChEBI" id="CHEBI:58756"/>
        <dbReference type="ChEBI" id="CHEBI:193091"/>
    </reaction>
    <physiologicalReaction direction="left-to-right" evidence="1">
        <dbReference type="Rhea" id="RHEA:74084"/>
    </physiologicalReaction>
</comment>
<comment type="catalytic activity">
    <reaction evidence="1">
        <text>all-trans-decaprenyl diphosphate + 4-hydroxybenzoate = 4-hydroxy-3-(all-trans-decaprenyl)benzoate + diphosphate</text>
        <dbReference type="Rhea" id="RHEA:44564"/>
        <dbReference type="ChEBI" id="CHEBI:17879"/>
        <dbReference type="ChEBI" id="CHEBI:33019"/>
        <dbReference type="ChEBI" id="CHEBI:60721"/>
        <dbReference type="ChEBI" id="CHEBI:84503"/>
        <dbReference type="EC" id="2.5.1.39"/>
    </reaction>
    <physiologicalReaction direction="left-to-right" evidence="1">
        <dbReference type="Rhea" id="RHEA:44565"/>
    </physiologicalReaction>
</comment>
<comment type="pathway">
    <text evidence="1">Quinol/quinone metabolism; menaquinone biosynthesis.</text>
</comment>
<comment type="pathway">
    <text evidence="1">Cofactor biosynthesis; ubiquinone biosynthesis.</text>
</comment>
<comment type="subunit">
    <text evidence="1">Interacts with HMGCR and SOAT1.</text>
</comment>
<comment type="subcellular location">
    <subcellularLocation>
        <location evidence="1">Endoplasmic reticulum membrane</location>
        <topology evidence="2">Multi-pass membrane protein</topology>
    </subcellularLocation>
    <subcellularLocation>
        <location evidence="1">Golgi apparatus membrane</location>
        <topology evidence="2">Multi-pass membrane protein</topology>
    </subcellularLocation>
    <subcellularLocation>
        <location evidence="1">Mitochondrion membrane</location>
        <topology evidence="2">Multi-pass membrane protein</topology>
    </subcellularLocation>
</comment>
<comment type="similarity">
    <text evidence="4">Belongs to the UbiA prenyltransferase family.</text>
</comment>
<organism>
    <name type="scientific">Rattus norvegicus</name>
    <name type="common">Rat</name>
    <dbReference type="NCBI Taxonomy" id="10116"/>
    <lineage>
        <taxon>Eukaryota</taxon>
        <taxon>Metazoa</taxon>
        <taxon>Chordata</taxon>
        <taxon>Craniata</taxon>
        <taxon>Vertebrata</taxon>
        <taxon>Euteleostomi</taxon>
        <taxon>Mammalia</taxon>
        <taxon>Eutheria</taxon>
        <taxon>Euarchontoglires</taxon>
        <taxon>Glires</taxon>
        <taxon>Rodentia</taxon>
        <taxon>Myomorpha</taxon>
        <taxon>Muroidea</taxon>
        <taxon>Muridae</taxon>
        <taxon>Murinae</taxon>
        <taxon>Rattus</taxon>
    </lineage>
</organism>
<dbReference type="EC" id="2.5.1.-" evidence="1"/>
<dbReference type="EC" id="2.5.1.39" evidence="1"/>
<dbReference type="EMBL" id="CH473968">
    <property type="protein sequence ID" value="EDL81120.1"/>
    <property type="molecule type" value="Genomic_DNA"/>
</dbReference>
<dbReference type="RefSeq" id="NP_001101463.1">
    <property type="nucleotide sequence ID" value="NM_001107993.1"/>
</dbReference>
<dbReference type="SMR" id="D3ZG27"/>
<dbReference type="FunCoup" id="D3ZG27">
    <property type="interactions" value="2528"/>
</dbReference>
<dbReference type="STRING" id="10116.ENSRNOP00000012691"/>
<dbReference type="GlyGen" id="D3ZG27">
    <property type="glycosylation" value="1 site"/>
</dbReference>
<dbReference type="iPTMnet" id="D3ZG27"/>
<dbReference type="PhosphoSitePlus" id="D3ZG27"/>
<dbReference type="PaxDb" id="10116-ENSRNOP00000012691"/>
<dbReference type="Ensembl" id="ENSRNOT00000012692.6">
    <property type="protein sequence ID" value="ENSRNOP00000012691.3"/>
    <property type="gene ID" value="ENSRNOG00000009575.6"/>
</dbReference>
<dbReference type="GeneID" id="313706"/>
<dbReference type="KEGG" id="rno:313706"/>
<dbReference type="AGR" id="RGD:1309588"/>
<dbReference type="CTD" id="29914"/>
<dbReference type="RGD" id="1309588">
    <property type="gene designation" value="Ubiad1"/>
</dbReference>
<dbReference type="eggNOG" id="KOG4581">
    <property type="taxonomic scope" value="Eukaryota"/>
</dbReference>
<dbReference type="GeneTree" id="ENSGT00390000012439"/>
<dbReference type="HOGENOM" id="CLU_043611_0_0_1"/>
<dbReference type="InParanoid" id="D3ZG27"/>
<dbReference type="OMA" id="QWIEGAR"/>
<dbReference type="OrthoDB" id="203513at2759"/>
<dbReference type="PhylomeDB" id="D3ZG27"/>
<dbReference type="TreeFam" id="TF323238"/>
<dbReference type="Reactome" id="R-RNO-6806664">
    <property type="pathway name" value="Metabolism of vitamin K"/>
</dbReference>
<dbReference type="UniPathway" id="UPA00079"/>
<dbReference type="UniPathway" id="UPA00232"/>
<dbReference type="PRO" id="PR:D3ZG27"/>
<dbReference type="Proteomes" id="UP000002494">
    <property type="component" value="Chromosome 5"/>
</dbReference>
<dbReference type="Proteomes" id="UP000234681">
    <property type="component" value="Chromosome 5"/>
</dbReference>
<dbReference type="Bgee" id="ENSRNOG00000009575">
    <property type="expression patterns" value="Expressed in skeletal muscle tissue and 18 other cell types or tissues"/>
</dbReference>
<dbReference type="GO" id="GO:0005737">
    <property type="term" value="C:cytoplasm"/>
    <property type="evidence" value="ECO:0000266"/>
    <property type="project" value="RGD"/>
</dbReference>
<dbReference type="GO" id="GO:0005783">
    <property type="term" value="C:endoplasmic reticulum"/>
    <property type="evidence" value="ECO:0000250"/>
    <property type="project" value="UniProtKB"/>
</dbReference>
<dbReference type="GO" id="GO:0005789">
    <property type="term" value="C:endoplasmic reticulum membrane"/>
    <property type="evidence" value="ECO:0000266"/>
    <property type="project" value="RGD"/>
</dbReference>
<dbReference type="GO" id="GO:0000139">
    <property type="term" value="C:Golgi membrane"/>
    <property type="evidence" value="ECO:0000250"/>
    <property type="project" value="UniProtKB"/>
</dbReference>
<dbReference type="GO" id="GO:0016020">
    <property type="term" value="C:membrane"/>
    <property type="evidence" value="ECO:0000266"/>
    <property type="project" value="RGD"/>
</dbReference>
<dbReference type="GO" id="GO:0031966">
    <property type="term" value="C:mitochondrial membrane"/>
    <property type="evidence" value="ECO:0007669"/>
    <property type="project" value="UniProtKB-SubCell"/>
</dbReference>
<dbReference type="GO" id="GO:0005634">
    <property type="term" value="C:nucleus"/>
    <property type="evidence" value="ECO:0000266"/>
    <property type="project" value="RGD"/>
</dbReference>
<dbReference type="GO" id="GO:0016209">
    <property type="term" value="F:antioxidant activity"/>
    <property type="evidence" value="ECO:0000250"/>
    <property type="project" value="UniProtKB"/>
</dbReference>
<dbReference type="GO" id="GO:0004659">
    <property type="term" value="F:prenyltransferase activity"/>
    <property type="evidence" value="ECO:0000250"/>
    <property type="project" value="UniProtKB"/>
</dbReference>
<dbReference type="GO" id="GO:0072359">
    <property type="term" value="P:circulatory system development"/>
    <property type="evidence" value="ECO:0000250"/>
    <property type="project" value="UniProtKB"/>
</dbReference>
<dbReference type="GO" id="GO:0001885">
    <property type="term" value="P:endothelial cell development"/>
    <property type="evidence" value="ECO:0000250"/>
    <property type="project" value="UniProtKB"/>
</dbReference>
<dbReference type="GO" id="GO:0009234">
    <property type="term" value="P:menaquinone biosynthetic process"/>
    <property type="evidence" value="ECO:0000250"/>
    <property type="project" value="UniProtKB"/>
</dbReference>
<dbReference type="GO" id="GO:0009233">
    <property type="term" value="P:menaquinone metabolic process"/>
    <property type="evidence" value="ECO:0000266"/>
    <property type="project" value="RGD"/>
</dbReference>
<dbReference type="GO" id="GO:0042374">
    <property type="term" value="P:phylloquinone metabolic process"/>
    <property type="evidence" value="ECO:0000266"/>
    <property type="project" value="RGD"/>
</dbReference>
<dbReference type="GO" id="GO:0006744">
    <property type="term" value="P:ubiquinone biosynthetic process"/>
    <property type="evidence" value="ECO:0000250"/>
    <property type="project" value="UniProtKB"/>
</dbReference>
<dbReference type="GO" id="GO:0042371">
    <property type="term" value="P:vitamin K biosynthetic process"/>
    <property type="evidence" value="ECO:0000250"/>
    <property type="project" value="UniProtKB"/>
</dbReference>
<dbReference type="CDD" id="cd13962">
    <property type="entry name" value="PT_UbiA_UBIAD1"/>
    <property type="match status" value="1"/>
</dbReference>
<dbReference type="FunFam" id="1.10.357.140:FF:000005">
    <property type="entry name" value="UbiA prenyltransferase domain-containing protein 1"/>
    <property type="match status" value="1"/>
</dbReference>
<dbReference type="Gene3D" id="1.10.357.140">
    <property type="entry name" value="UbiA prenyltransferase"/>
    <property type="match status" value="1"/>
</dbReference>
<dbReference type="InterPro" id="IPR000537">
    <property type="entry name" value="UbiA_prenyltransferase"/>
</dbReference>
<dbReference type="InterPro" id="IPR044878">
    <property type="entry name" value="UbiA_sf"/>
</dbReference>
<dbReference type="InterPro" id="IPR026046">
    <property type="entry name" value="UBIAD1"/>
</dbReference>
<dbReference type="PANTHER" id="PTHR13929">
    <property type="entry name" value="1,4-DIHYDROXY-2-NAPHTHOATE OCTAPRENYLTRANSFERASE"/>
    <property type="match status" value="1"/>
</dbReference>
<dbReference type="PANTHER" id="PTHR13929:SF0">
    <property type="entry name" value="UBIA PRENYLTRANSFERASE DOMAIN-CONTAINING PROTEIN 1"/>
    <property type="match status" value="1"/>
</dbReference>
<dbReference type="Pfam" id="PF01040">
    <property type="entry name" value="UbiA"/>
    <property type="match status" value="1"/>
</dbReference>
<dbReference type="PIRSF" id="PIRSF005355">
    <property type="entry name" value="UBIAD1"/>
    <property type="match status" value="1"/>
</dbReference>
<proteinExistence type="inferred from homology"/>
<name>UBIA1_RAT</name>
<keyword id="KW-0007">Acetylation</keyword>
<keyword id="KW-0256">Endoplasmic reticulum</keyword>
<keyword id="KW-0333">Golgi apparatus</keyword>
<keyword id="KW-0472">Membrane</keyword>
<keyword id="KW-0474">Menaquinone biosynthesis</keyword>
<keyword id="KW-0496">Mitochondrion</keyword>
<keyword id="KW-0637">Prenyltransferase</keyword>
<keyword id="KW-1185">Reference proteome</keyword>
<keyword id="KW-0808">Transferase</keyword>
<keyword id="KW-0812">Transmembrane</keyword>
<keyword id="KW-1133">Transmembrane helix</keyword>
<keyword id="KW-0831">Ubiquinone biosynthesis</keyword>